<dbReference type="EC" id="2.3.2.27"/>
<dbReference type="EMBL" id="BC089294">
    <property type="protein sequence ID" value="AAH89294.1"/>
    <property type="molecule type" value="mRNA"/>
</dbReference>
<dbReference type="EMBL" id="BC108758">
    <property type="protein sequence ID" value="AAI08759.1"/>
    <property type="molecule type" value="mRNA"/>
</dbReference>
<dbReference type="RefSeq" id="NP_001089261.1">
    <property type="nucleotide sequence ID" value="NM_001095792.1"/>
</dbReference>
<dbReference type="SMR" id="Q5FWL3"/>
<dbReference type="DNASU" id="734308"/>
<dbReference type="GeneID" id="734308"/>
<dbReference type="KEGG" id="xla:734308"/>
<dbReference type="AGR" id="Xenbase:XB-GENE-943151"/>
<dbReference type="CTD" id="734308"/>
<dbReference type="Xenbase" id="XB-GENE-943151">
    <property type="gene designation" value="rnf41.S"/>
</dbReference>
<dbReference type="OMA" id="QYENYVC"/>
<dbReference type="OrthoDB" id="1630758at2759"/>
<dbReference type="UniPathway" id="UPA00143"/>
<dbReference type="Proteomes" id="UP000186698">
    <property type="component" value="Chromosome 2S"/>
</dbReference>
<dbReference type="Bgee" id="734308">
    <property type="expression patterns" value="Expressed in muscle tissue and 19 other cell types or tissues"/>
</dbReference>
<dbReference type="GO" id="GO:0061630">
    <property type="term" value="F:ubiquitin protein ligase activity"/>
    <property type="evidence" value="ECO:0007669"/>
    <property type="project" value="InterPro"/>
</dbReference>
<dbReference type="GO" id="GO:0004842">
    <property type="term" value="F:ubiquitin-protein transferase activity"/>
    <property type="evidence" value="ECO:0000250"/>
    <property type="project" value="UniProtKB"/>
</dbReference>
<dbReference type="GO" id="GO:0008270">
    <property type="term" value="F:zinc ion binding"/>
    <property type="evidence" value="ECO:0007669"/>
    <property type="project" value="UniProtKB-KW"/>
</dbReference>
<dbReference type="GO" id="GO:0097191">
    <property type="term" value="P:extrinsic apoptotic signaling pathway"/>
    <property type="evidence" value="ECO:0000250"/>
    <property type="project" value="UniProtKB"/>
</dbReference>
<dbReference type="GO" id="GO:0000209">
    <property type="term" value="P:protein polyubiquitination"/>
    <property type="evidence" value="ECO:0000250"/>
    <property type="project" value="UniProtKB"/>
</dbReference>
<dbReference type="GO" id="GO:0043122">
    <property type="term" value="P:regulation of canonical NF-kappaB signal transduction"/>
    <property type="evidence" value="ECO:0007669"/>
    <property type="project" value="TreeGrafter"/>
</dbReference>
<dbReference type="CDD" id="cd16634">
    <property type="entry name" value="mRING-HC-C3HC3D_Nrdp1"/>
    <property type="match status" value="1"/>
</dbReference>
<dbReference type="FunFam" id="3.30.40.10:FF:000268">
    <property type="entry name" value="E3 ubiquitin-protein ligase NRDP1"/>
    <property type="match status" value="1"/>
</dbReference>
<dbReference type="FunFam" id="3.30.40.10:FF:000302">
    <property type="entry name" value="E3 ubiquitin-protein ligase NRDP1"/>
    <property type="match status" value="1"/>
</dbReference>
<dbReference type="Gene3D" id="3.30.40.10">
    <property type="entry name" value="Zinc/RING finger domain, C3HC4 (zinc finger)"/>
    <property type="match status" value="2"/>
</dbReference>
<dbReference type="InterPro" id="IPR015036">
    <property type="entry name" value="NRDP1"/>
</dbReference>
<dbReference type="InterPro" id="IPR037255">
    <property type="entry name" value="NRDP1_C"/>
</dbReference>
<dbReference type="InterPro" id="IPR001841">
    <property type="entry name" value="Znf_RING"/>
</dbReference>
<dbReference type="InterPro" id="IPR013083">
    <property type="entry name" value="Znf_RING/FYVE/PHD"/>
</dbReference>
<dbReference type="InterPro" id="IPR017907">
    <property type="entry name" value="Znf_RING_CS"/>
</dbReference>
<dbReference type="PANTHER" id="PTHR10131:SF157">
    <property type="entry name" value="RECEPTOR-ASSOCIATED FACTOR, PUTATIVE-RELATED"/>
    <property type="match status" value="1"/>
</dbReference>
<dbReference type="PANTHER" id="PTHR10131">
    <property type="entry name" value="TNF RECEPTOR ASSOCIATED FACTOR"/>
    <property type="match status" value="1"/>
</dbReference>
<dbReference type="Pfam" id="PF08941">
    <property type="entry name" value="USP8_interact"/>
    <property type="match status" value="1"/>
</dbReference>
<dbReference type="Pfam" id="PF13923">
    <property type="entry name" value="zf-C3HC4_2"/>
    <property type="match status" value="1"/>
</dbReference>
<dbReference type="SMART" id="SM00184">
    <property type="entry name" value="RING"/>
    <property type="match status" value="1"/>
</dbReference>
<dbReference type="SUPFAM" id="SSF160088">
    <property type="entry name" value="NRDP1 C-terminal domain-like"/>
    <property type="match status" value="1"/>
</dbReference>
<dbReference type="SUPFAM" id="SSF57850">
    <property type="entry name" value="RING/U-box"/>
    <property type="match status" value="1"/>
</dbReference>
<dbReference type="SUPFAM" id="SSF49599">
    <property type="entry name" value="TRAF domain-like"/>
    <property type="match status" value="1"/>
</dbReference>
<dbReference type="PROSITE" id="PS00518">
    <property type="entry name" value="ZF_RING_1"/>
    <property type="match status" value="1"/>
</dbReference>
<dbReference type="PROSITE" id="PS50089">
    <property type="entry name" value="ZF_RING_2"/>
    <property type="match status" value="1"/>
</dbReference>
<comment type="function">
    <text evidence="1">Acts as E3 ubiquitin-protein ligase and regulates the degradation of target proteins.</text>
</comment>
<comment type="catalytic activity">
    <reaction>
        <text>S-ubiquitinyl-[E2 ubiquitin-conjugating enzyme]-L-cysteine + [acceptor protein]-L-lysine = [E2 ubiquitin-conjugating enzyme]-L-cysteine + N(6)-ubiquitinyl-[acceptor protein]-L-lysine.</text>
        <dbReference type="EC" id="2.3.2.27"/>
    </reaction>
</comment>
<comment type="pathway">
    <text>Protein modification; protein ubiquitination.</text>
</comment>
<organism>
    <name type="scientific">Xenopus laevis</name>
    <name type="common">African clawed frog</name>
    <dbReference type="NCBI Taxonomy" id="8355"/>
    <lineage>
        <taxon>Eukaryota</taxon>
        <taxon>Metazoa</taxon>
        <taxon>Chordata</taxon>
        <taxon>Craniata</taxon>
        <taxon>Vertebrata</taxon>
        <taxon>Euteleostomi</taxon>
        <taxon>Amphibia</taxon>
        <taxon>Batrachia</taxon>
        <taxon>Anura</taxon>
        <taxon>Pipoidea</taxon>
        <taxon>Pipidae</taxon>
        <taxon>Xenopodinae</taxon>
        <taxon>Xenopus</taxon>
        <taxon>Xenopus</taxon>
    </lineage>
</organism>
<feature type="chain" id="PRO_0000223957" description="E3 ubiquitin-protein ligase NRDP1">
    <location>
        <begin position="1"/>
        <end position="317"/>
    </location>
</feature>
<feature type="zinc finger region" description="RING-type; degenerate" evidence="3">
    <location>
        <begin position="18"/>
        <end position="57"/>
    </location>
</feature>
<feature type="coiled-coil region" evidence="2">
    <location>
        <begin position="135"/>
        <end position="175"/>
    </location>
</feature>
<gene>
    <name type="primary">rnf41</name>
    <name type="synonym">nrdp1</name>
</gene>
<sequence>MGYDVSRFQGDVDEDLICPICSGVLEEPVQAPHCEHAFCNACITQWFSQQQTCPVDRSVVTVAHLRPVPRIMRNMLSKLQITCDNAVFGCTTIVRLDNLMSHLSDCEHNPKRPVTCEQGCGLEMPKDEVPNHNCIKHLRSVVQQQQIRIGELEKTAAESKHQLSEQKRDIQLLKAYMRAIRSANPNLQNLEETIEYNEILEWVNSLQPARVTRWGGMISTPDAVLQAVIKRSLVESGCPASIVNEIIENAHERNWPQGLATLETRQMNRRYYENYVAKRIPGKQAVVVMACENQHMGEDMVLEPGLVMIFAHGVEEI</sequence>
<proteinExistence type="evidence at transcript level"/>
<accession>Q5FWL3</accession>
<evidence type="ECO:0000250" key="1">
    <source>
        <dbReference type="UniProtKB" id="Q9H4P4"/>
    </source>
</evidence>
<evidence type="ECO:0000255" key="2"/>
<evidence type="ECO:0000255" key="3">
    <source>
        <dbReference type="PROSITE-ProRule" id="PRU00175"/>
    </source>
</evidence>
<evidence type="ECO:0000305" key="4"/>
<reference key="1">
    <citation type="submission" date="2005-01" db="EMBL/GenBank/DDBJ databases">
        <authorList>
            <consortium name="NIH - Xenopus Gene Collection (XGC) project"/>
        </authorList>
    </citation>
    <scope>NUCLEOTIDE SEQUENCE [LARGE SCALE MRNA]</scope>
    <source>
        <tissue>Egg</tissue>
    </source>
</reference>
<keyword id="KW-0175">Coiled coil</keyword>
<keyword id="KW-0479">Metal-binding</keyword>
<keyword id="KW-1185">Reference proteome</keyword>
<keyword id="KW-0808">Transferase</keyword>
<keyword id="KW-0833">Ubl conjugation pathway</keyword>
<keyword id="KW-0862">Zinc</keyword>
<keyword id="KW-0863">Zinc-finger</keyword>
<protein>
    <recommendedName>
        <fullName>E3 ubiquitin-protein ligase NRDP1</fullName>
        <ecNumber>2.3.2.27</ecNumber>
    </recommendedName>
    <alternativeName>
        <fullName>RING finger protein 41</fullName>
    </alternativeName>
    <alternativeName>
        <fullName evidence="4">RING-type E3 ubiquitin transferase NRDP1</fullName>
    </alternativeName>
</protein>
<name>RNF41_XENLA</name>